<comment type="function">
    <text evidence="1">Involved in transcription antitermination. Required for transcription of ribosomal RNA (rRNA) genes. Binds specifically to the boxA antiterminator sequence of the ribosomal RNA (rrn) operons.</text>
</comment>
<comment type="similarity">
    <text evidence="1">Belongs to the NusB family.</text>
</comment>
<protein>
    <recommendedName>
        <fullName evidence="1">Transcription antitermination protein NusB</fullName>
    </recommendedName>
    <alternativeName>
        <fullName evidence="1">Antitermination factor NusB</fullName>
    </alternativeName>
</protein>
<dbReference type="EMBL" id="CP001161">
    <property type="protein sequence ID" value="ACL30811.1"/>
    <property type="molecule type" value="Genomic_DNA"/>
</dbReference>
<dbReference type="RefSeq" id="WP_009874415.1">
    <property type="nucleotide sequence ID" value="NC_011833.1"/>
</dbReference>
<dbReference type="SMR" id="B8D9P0"/>
<dbReference type="KEGG" id="bap:BUAP5A_456"/>
<dbReference type="HOGENOM" id="CLU_087843_4_1_6"/>
<dbReference type="OrthoDB" id="9789556at2"/>
<dbReference type="Proteomes" id="UP000006904">
    <property type="component" value="Chromosome"/>
</dbReference>
<dbReference type="GO" id="GO:0005829">
    <property type="term" value="C:cytosol"/>
    <property type="evidence" value="ECO:0007669"/>
    <property type="project" value="TreeGrafter"/>
</dbReference>
<dbReference type="GO" id="GO:0003723">
    <property type="term" value="F:RNA binding"/>
    <property type="evidence" value="ECO:0007669"/>
    <property type="project" value="UniProtKB-UniRule"/>
</dbReference>
<dbReference type="GO" id="GO:0006353">
    <property type="term" value="P:DNA-templated transcription termination"/>
    <property type="evidence" value="ECO:0007669"/>
    <property type="project" value="UniProtKB-UniRule"/>
</dbReference>
<dbReference type="GO" id="GO:0031564">
    <property type="term" value="P:transcription antitermination"/>
    <property type="evidence" value="ECO:0007669"/>
    <property type="project" value="UniProtKB-KW"/>
</dbReference>
<dbReference type="Gene3D" id="1.10.940.10">
    <property type="entry name" value="NusB-like"/>
    <property type="match status" value="1"/>
</dbReference>
<dbReference type="HAMAP" id="MF_00073">
    <property type="entry name" value="NusB"/>
    <property type="match status" value="1"/>
</dbReference>
<dbReference type="InterPro" id="IPR035926">
    <property type="entry name" value="NusB-like_sf"/>
</dbReference>
<dbReference type="InterPro" id="IPR011605">
    <property type="entry name" value="NusB_fam"/>
</dbReference>
<dbReference type="InterPro" id="IPR006027">
    <property type="entry name" value="NusB_RsmB_TIM44"/>
</dbReference>
<dbReference type="NCBIfam" id="TIGR01951">
    <property type="entry name" value="nusB"/>
    <property type="match status" value="1"/>
</dbReference>
<dbReference type="PANTHER" id="PTHR11078:SF3">
    <property type="entry name" value="ANTITERMINATION NUSB DOMAIN-CONTAINING PROTEIN"/>
    <property type="match status" value="1"/>
</dbReference>
<dbReference type="PANTHER" id="PTHR11078">
    <property type="entry name" value="N UTILIZATION SUBSTANCE PROTEIN B-RELATED"/>
    <property type="match status" value="1"/>
</dbReference>
<dbReference type="Pfam" id="PF01029">
    <property type="entry name" value="NusB"/>
    <property type="match status" value="1"/>
</dbReference>
<dbReference type="SUPFAM" id="SSF48013">
    <property type="entry name" value="NusB-like"/>
    <property type="match status" value="1"/>
</dbReference>
<gene>
    <name evidence="1" type="primary">nusB</name>
    <name type="ordered locus">BUAP5A_456</name>
</gene>
<organism>
    <name type="scientific">Buchnera aphidicola subsp. Acyrthosiphon pisum (strain 5A)</name>
    <dbReference type="NCBI Taxonomy" id="563178"/>
    <lineage>
        <taxon>Bacteria</taxon>
        <taxon>Pseudomonadati</taxon>
        <taxon>Pseudomonadota</taxon>
        <taxon>Gammaproteobacteria</taxon>
        <taxon>Enterobacterales</taxon>
        <taxon>Erwiniaceae</taxon>
        <taxon>Buchnera</taxon>
    </lineage>
</organism>
<accession>B8D9P0</accession>
<evidence type="ECO:0000255" key="1">
    <source>
        <dbReference type="HAMAP-Rule" id="MF_00073"/>
    </source>
</evidence>
<keyword id="KW-0694">RNA-binding</keyword>
<keyword id="KW-0804">Transcription</keyword>
<keyword id="KW-0889">Transcription antitermination</keyword>
<keyword id="KW-0805">Transcription regulation</keyword>
<proteinExistence type="inferred from homology"/>
<sequence>MKPSFRRKARACALQVLYSWEISHNNIKESAIYFLKEKNKKNIDIVYFYELIIGITYDCKNIDNLMKPYLFRSLKELGHIERAILRISFYELHKRNDIPYKVSINEGIELAKLFGSEDSHKFINGVLDKAVFKMGYNKKVVIT</sequence>
<reference key="1">
    <citation type="journal article" date="2009" name="Science">
        <title>The dynamics and time scale of ongoing genomic erosion in symbiotic bacteria.</title>
        <authorList>
            <person name="Moran N.A."/>
            <person name="McLaughlin H.J."/>
            <person name="Sorek R."/>
        </authorList>
    </citation>
    <scope>NUCLEOTIDE SEQUENCE [LARGE SCALE GENOMIC DNA]</scope>
    <source>
        <strain>5A</strain>
    </source>
</reference>
<feature type="chain" id="PRO_1000192419" description="Transcription antitermination protein NusB">
    <location>
        <begin position="1"/>
        <end position="143"/>
    </location>
</feature>
<name>NUSB_BUCA5</name>